<name>U119A_MOUSE</name>
<reference key="1">
    <citation type="journal article" date="1998" name="Invest. Ophthalmol. Vis. Sci.">
        <title>Mammalian orthologs of C. elegans unc-119 highly expressed in photoreceptors.</title>
        <authorList>
            <person name="Swanson D.A."/>
            <person name="Chang J.T."/>
            <person name="Campochiaro P.A."/>
            <person name="Zack D.J."/>
            <person name="Valle D."/>
        </authorList>
    </citation>
    <scope>NUCLEOTIDE SEQUENCE [MRNA]</scope>
    <source>
        <tissue>Retina</tissue>
    </source>
</reference>
<reference key="2">
    <citation type="journal article" date="2004" name="Genome Res.">
        <title>The status, quality, and expansion of the NIH full-length cDNA project: the Mammalian Gene Collection (MGC).</title>
        <authorList>
            <consortium name="The MGC Project Team"/>
        </authorList>
    </citation>
    <scope>NUCLEOTIDE SEQUENCE [LARGE SCALE MRNA]</scope>
    <source>
        <strain>C57BL/6J</strain>
        <tissue>Mammary gland</tissue>
    </source>
</reference>
<reference key="3">
    <citation type="journal article" date="2007" name="Exp. Eye Res.">
        <title>Targeted inactivation of synaptic HRG4 (UNC119) causes dysfunction in the distal photoreceptor and slow retinal degeneration, revealing a new function.</title>
        <authorList>
            <person name="Ishiba Y."/>
            <person name="Higashide T."/>
            <person name="Mori N."/>
            <person name="Kobayashi A."/>
            <person name="Kubota S."/>
            <person name="McLaren M.J."/>
            <person name="Satoh H."/>
            <person name="Wong F."/>
            <person name="Inana G."/>
        </authorList>
    </citation>
    <scope>DISRUPTION PHENOTYPE</scope>
    <scope>FUNCTION</scope>
</reference>
<reference key="4">
    <citation type="journal article" date="2007" name="Proc. Natl. Acad. Sci. U.S.A.">
        <title>Large-scale phosphorylation analysis of mouse liver.</title>
        <authorList>
            <person name="Villen J."/>
            <person name="Beausoleil S.A."/>
            <person name="Gerber S.A."/>
            <person name="Gygi S.P."/>
        </authorList>
    </citation>
    <scope>PHOSPHORYLATION [LARGE SCALE ANALYSIS] AT SER-37</scope>
    <scope>IDENTIFICATION BY MASS SPECTROMETRY [LARGE SCALE ANALYSIS]</scope>
    <source>
        <tissue>Liver</tissue>
    </source>
</reference>
<reference key="5">
    <citation type="journal article" date="2008" name="Invest. Ophthalmol. Vis. Sci.">
        <title>Interaction and colocalization of CaBP4 and Unc119 (MRG4) in photoreceptors.</title>
        <authorList>
            <person name="Haeseleer F."/>
        </authorList>
    </citation>
    <scope>INTERACTION WITH CABP4</scope>
    <scope>TISSUE SPECIFICITY</scope>
</reference>
<reference key="6">
    <citation type="journal article" date="2010" name="Cell">
        <title>A tissue-specific atlas of mouse protein phosphorylation and expression.</title>
        <authorList>
            <person name="Huttlin E.L."/>
            <person name="Jedrychowski M.P."/>
            <person name="Elias J.E."/>
            <person name="Goswami T."/>
            <person name="Rad R."/>
            <person name="Beausoleil S.A."/>
            <person name="Villen J."/>
            <person name="Haas W."/>
            <person name="Sowa M.E."/>
            <person name="Gygi S.P."/>
        </authorList>
    </citation>
    <scope>PHOSPHORYLATION [LARGE SCALE ANALYSIS] AT SER-37; SER-39 AND SER-41</scope>
    <scope>IDENTIFICATION BY MASS SPECTROMETRY [LARGE SCALE ANALYSIS]</scope>
    <source>
        <tissue>Brain</tissue>
        <tissue>Brown adipose tissue</tissue>
        <tissue>Lung</tissue>
        <tissue>Spleen</tissue>
        <tissue>Testis</tissue>
    </source>
</reference>
<reference key="7">
    <citation type="journal article" date="2010" name="Cell. Signal.">
        <title>UNC119 inhibits dynamin and dynamin-dependent endocytic processes.</title>
        <authorList>
            <person name="Karim Z."/>
            <person name="Vepachedu R."/>
            <person name="Gorska M."/>
            <person name="Alam R."/>
        </authorList>
    </citation>
    <scope>FUNCTION IN ENDOCYTOSIS</scope>
    <scope>INTERACTION WITH DNM1</scope>
</reference>
<reference key="8">
    <citation type="journal article" date="2011" name="Nat. Neurosci.">
        <title>UNC119 is required for G protein trafficking in sensory neurons.</title>
        <authorList>
            <person name="Zhang H."/>
            <person name="Constantine R."/>
            <person name="Vorobiev S."/>
            <person name="Chen Y."/>
            <person name="Seetharaman J."/>
            <person name="Huang Y.J."/>
            <person name="Xiao R."/>
            <person name="Montelione G.T."/>
            <person name="Gerstner C.D."/>
            <person name="Davis M.W."/>
            <person name="Inana G."/>
            <person name="Whitby F.G."/>
            <person name="Jorgensen E.M."/>
            <person name="Hill C.P."/>
            <person name="Tong L."/>
            <person name="Baehr W."/>
        </authorList>
    </citation>
    <scope>FUNCTION</scope>
    <scope>DISRUPTION PHENOTYPE</scope>
</reference>
<reference key="9">
    <citation type="journal article" date="2019" name="EMBO J.">
        <title>Cul3-Klhl18 ubiquitin ligase modulates rod transducin translocation during light-dark adaptation.</title>
        <authorList>
            <person name="Chaya T."/>
            <person name="Tsutsumi R."/>
            <person name="Varner L.R."/>
            <person name="Maeda Y."/>
            <person name="Yoshida S."/>
            <person name="Furukawa T."/>
        </authorList>
    </citation>
    <scope>PHOSPHORYLATION AT SER-37; SER-39 AND SER-41</scope>
    <scope>MUTAGENESIS OF SER-37; SER-39 AND SER-41</scope>
    <scope>INTERACTION WITH KLHL18; PPP3CA; PPP3CB AND PPP3CC</scope>
</reference>
<proteinExistence type="evidence at protein level"/>
<organism>
    <name type="scientific">Mus musculus</name>
    <name type="common">Mouse</name>
    <dbReference type="NCBI Taxonomy" id="10090"/>
    <lineage>
        <taxon>Eukaryota</taxon>
        <taxon>Metazoa</taxon>
        <taxon>Chordata</taxon>
        <taxon>Craniata</taxon>
        <taxon>Vertebrata</taxon>
        <taxon>Euteleostomi</taxon>
        <taxon>Mammalia</taxon>
        <taxon>Eutheria</taxon>
        <taxon>Euarchontoglires</taxon>
        <taxon>Glires</taxon>
        <taxon>Rodentia</taxon>
        <taxon>Myomorpha</taxon>
        <taxon>Muroidea</taxon>
        <taxon>Muridae</taxon>
        <taxon>Murinae</taxon>
        <taxon>Mus</taxon>
        <taxon>Mus</taxon>
    </lineage>
</organism>
<gene>
    <name type="primary">Unc119</name>
    <name type="synonym">Unc119h</name>
</gene>
<keyword id="KW-0182">Cone-rod dystrophy</keyword>
<keyword id="KW-0963">Cytoplasm</keyword>
<keyword id="KW-0206">Cytoskeleton</keyword>
<keyword id="KW-0254">Endocytosis</keyword>
<keyword id="KW-0446">Lipid-binding</keyword>
<keyword id="KW-0597">Phosphoprotein</keyword>
<keyword id="KW-0653">Protein transport</keyword>
<keyword id="KW-1185">Reference proteome</keyword>
<keyword id="KW-0716">Sensory transduction</keyword>
<keyword id="KW-0813">Transport</keyword>
<keyword id="KW-0844">Vision</keyword>
<sequence>MKVKKGGGGTGSGAEPVPGASNRSAEPTREPGAEAESGSESEPEPGPGPRLGPLQGKQPIGPEDVLGLQRITGDYLCSPEENIYKIDFVRFKIRDMDSGTVLFEIKKPPVSERLPINRRDLDPNAGRFVRYQFTPAFLRLRQVGATVEFTVGDKPVNNFRMIERHYFRNQLLKSFDFHFGFCIPSSKNTCEHIYDFPPLSEELISEMIRHPYETQSDSFYFVDDRLVMHNKADYSYSGTP</sequence>
<dbReference type="EMBL" id="AF030169">
    <property type="protein sequence ID" value="AAD01893.1"/>
    <property type="molecule type" value="mRNA"/>
</dbReference>
<dbReference type="EMBL" id="BC001990">
    <property type="protein sequence ID" value="AAH01990.1"/>
    <property type="molecule type" value="mRNA"/>
</dbReference>
<dbReference type="CCDS" id="CCDS25101.1"/>
<dbReference type="RefSeq" id="NP_035806.1">
    <property type="nucleotide sequence ID" value="NM_011676.3"/>
</dbReference>
<dbReference type="BioGRID" id="204443">
    <property type="interactions" value="6"/>
</dbReference>
<dbReference type="CORUM" id="Q9Z2R6"/>
<dbReference type="FunCoup" id="Q9Z2R6">
    <property type="interactions" value="413"/>
</dbReference>
<dbReference type="STRING" id="10090.ENSMUSP00000103930"/>
<dbReference type="iPTMnet" id="Q9Z2R6"/>
<dbReference type="PhosphoSitePlus" id="Q9Z2R6"/>
<dbReference type="jPOST" id="Q9Z2R6"/>
<dbReference type="PaxDb" id="10090-ENSMUSP00000002127"/>
<dbReference type="ProteomicsDB" id="298161"/>
<dbReference type="Pumba" id="Q9Z2R6"/>
<dbReference type="Antibodypedia" id="26315">
    <property type="antibodies" value="61 antibodies from 22 providers"/>
</dbReference>
<dbReference type="DNASU" id="22248"/>
<dbReference type="Ensembl" id="ENSMUST00000002127.14">
    <property type="protein sequence ID" value="ENSMUSP00000002127.8"/>
    <property type="gene ID" value="ENSMUSG00000002058.14"/>
</dbReference>
<dbReference type="GeneID" id="22248"/>
<dbReference type="KEGG" id="mmu:22248"/>
<dbReference type="UCSC" id="uc007kjb.1">
    <property type="organism name" value="mouse"/>
</dbReference>
<dbReference type="AGR" id="MGI:1328357"/>
<dbReference type="CTD" id="9094"/>
<dbReference type="MGI" id="MGI:1328357">
    <property type="gene designation" value="Unc119"/>
</dbReference>
<dbReference type="VEuPathDB" id="HostDB:ENSMUSG00000002058"/>
<dbReference type="eggNOG" id="KOG4037">
    <property type="taxonomic scope" value="Eukaryota"/>
</dbReference>
<dbReference type="GeneTree" id="ENSGT00390000014595"/>
<dbReference type="InParanoid" id="Q9Z2R6"/>
<dbReference type="OrthoDB" id="10248777at2759"/>
<dbReference type="PhylomeDB" id="Q9Z2R6"/>
<dbReference type="TreeFam" id="TF314474"/>
<dbReference type="BioGRID-ORCS" id="22248">
    <property type="hits" value="5 hits in 79 CRISPR screens"/>
</dbReference>
<dbReference type="PRO" id="PR:Q9Z2R6"/>
<dbReference type="Proteomes" id="UP000000589">
    <property type="component" value="Chromosome 11"/>
</dbReference>
<dbReference type="RNAct" id="Q9Z2R6">
    <property type="molecule type" value="protein"/>
</dbReference>
<dbReference type="Bgee" id="ENSMUSG00000002058">
    <property type="expression patterns" value="Expressed in retinal neural layer and 252 other cell types or tissues"/>
</dbReference>
<dbReference type="ExpressionAtlas" id="Q9Z2R6">
    <property type="expression patterns" value="baseline and differential"/>
</dbReference>
<dbReference type="GO" id="GO:0005813">
    <property type="term" value="C:centrosome"/>
    <property type="evidence" value="ECO:0000250"/>
    <property type="project" value="UniProtKB"/>
</dbReference>
<dbReference type="GO" id="GO:0005737">
    <property type="term" value="C:cytoplasm"/>
    <property type="evidence" value="ECO:0007669"/>
    <property type="project" value="UniProtKB-KW"/>
</dbReference>
<dbReference type="GO" id="GO:0045171">
    <property type="term" value="C:intercellular bridge"/>
    <property type="evidence" value="ECO:0000250"/>
    <property type="project" value="UniProtKB"/>
</dbReference>
<dbReference type="GO" id="GO:0051233">
    <property type="term" value="C:spindle midzone"/>
    <property type="evidence" value="ECO:0000250"/>
    <property type="project" value="UniProtKB"/>
</dbReference>
<dbReference type="GO" id="GO:0000922">
    <property type="term" value="C:spindle pole"/>
    <property type="evidence" value="ECO:0000250"/>
    <property type="project" value="UniProtKB"/>
</dbReference>
<dbReference type="GO" id="GO:0008289">
    <property type="term" value="F:lipid binding"/>
    <property type="evidence" value="ECO:0000250"/>
    <property type="project" value="UniProtKB"/>
</dbReference>
<dbReference type="GO" id="GO:0006897">
    <property type="term" value="P:endocytosis"/>
    <property type="evidence" value="ECO:0007669"/>
    <property type="project" value="UniProtKB-KW"/>
</dbReference>
<dbReference type="GO" id="GO:0042953">
    <property type="term" value="P:lipoprotein transport"/>
    <property type="evidence" value="ECO:0000315"/>
    <property type="project" value="UniProtKB"/>
</dbReference>
<dbReference type="GO" id="GO:0000281">
    <property type="term" value="P:mitotic cytokinesis"/>
    <property type="evidence" value="ECO:0000250"/>
    <property type="project" value="UniProtKB"/>
</dbReference>
<dbReference type="GO" id="GO:2001287">
    <property type="term" value="P:negative regulation of caveolin-mediated endocytosis"/>
    <property type="evidence" value="ECO:0000315"/>
    <property type="project" value="UniProtKB"/>
</dbReference>
<dbReference type="GO" id="GO:1900186">
    <property type="term" value="P:negative regulation of clathrin-dependent endocytosis"/>
    <property type="evidence" value="ECO:0000315"/>
    <property type="project" value="UniProtKB"/>
</dbReference>
<dbReference type="GO" id="GO:0007601">
    <property type="term" value="P:visual perception"/>
    <property type="evidence" value="ECO:0007669"/>
    <property type="project" value="UniProtKB-KW"/>
</dbReference>
<dbReference type="FunFam" id="2.70.50.40:FF:000001">
    <property type="entry name" value="protein unc-119 homolog A"/>
    <property type="match status" value="1"/>
</dbReference>
<dbReference type="Gene3D" id="2.70.50.40">
    <property type="entry name" value="GMP phosphodiesterase, delta subunit"/>
    <property type="match status" value="1"/>
</dbReference>
<dbReference type="InterPro" id="IPR014756">
    <property type="entry name" value="Ig_E-set"/>
</dbReference>
<dbReference type="InterPro" id="IPR051519">
    <property type="entry name" value="PDE6D_unc-119_myristoyl-bd"/>
</dbReference>
<dbReference type="InterPro" id="IPR008015">
    <property type="entry name" value="PDED_dom"/>
</dbReference>
<dbReference type="InterPro" id="IPR037036">
    <property type="entry name" value="PDED_dom_sf"/>
</dbReference>
<dbReference type="PANTHER" id="PTHR12951:SF5">
    <property type="entry name" value="PROTEIN UNC-119 HOMOLOG A"/>
    <property type="match status" value="1"/>
</dbReference>
<dbReference type="PANTHER" id="PTHR12951">
    <property type="entry name" value="RETINAL PROTEIN 4"/>
    <property type="match status" value="1"/>
</dbReference>
<dbReference type="Pfam" id="PF05351">
    <property type="entry name" value="GMP_PDE_delta"/>
    <property type="match status" value="1"/>
</dbReference>
<dbReference type="SUPFAM" id="SSF81296">
    <property type="entry name" value="E set domains"/>
    <property type="match status" value="1"/>
</dbReference>
<feature type="chain" id="PRO_0000221213" description="Protein unc-119 homolog A">
    <location>
        <begin position="1"/>
        <end position="240"/>
    </location>
</feature>
<feature type="region of interest" description="Disordered" evidence="3">
    <location>
        <begin position="1"/>
        <end position="62"/>
    </location>
</feature>
<feature type="compositionally biased region" description="Gly residues" evidence="3">
    <location>
        <begin position="1"/>
        <end position="12"/>
    </location>
</feature>
<feature type="binding site" evidence="1">
    <location>
        <position position="131"/>
    </location>
    <ligand>
        <name>tetradecanoate</name>
        <dbReference type="ChEBI" id="CHEBI:30807"/>
    </ligand>
</feature>
<feature type="modified residue" description="Phosphoserine; by CK2" evidence="8 10 11">
    <location>
        <position position="37"/>
    </location>
</feature>
<feature type="modified residue" description="Phosphoserine; by CK2" evidence="8 11">
    <location>
        <position position="39"/>
    </location>
</feature>
<feature type="modified residue" description="Phosphoserine; by CK2" evidence="8 11">
    <location>
        <position position="41"/>
    </location>
</feature>
<feature type="mutagenesis site" description="Up-regulation of KLH18-mediated degradation; when associated with A-39 and A-41." evidence="8">
    <original>S</original>
    <variation>A</variation>
    <location>
        <position position="37"/>
    </location>
</feature>
<feature type="mutagenesis site" description="Up-regulation of KLH18-mediated degradation; when associated with A-37 and A-41." evidence="8">
    <original>S</original>
    <variation>A</variation>
    <location>
        <position position="39"/>
    </location>
</feature>
<feature type="mutagenesis site" description="Up-regulation of KLH18-mediated degradation; when associated with A-37 and A-39." evidence="8">
    <original>S</original>
    <variation>A</variation>
    <location>
        <position position="41"/>
    </location>
</feature>
<protein>
    <recommendedName>
        <fullName>Protein unc-119 homolog A</fullName>
    </recommendedName>
    <alternativeName>
        <fullName>Retinal protein 4</fullName>
        <shortName>mRG4</shortName>
    </alternativeName>
</protein>
<comment type="function">
    <text evidence="2 4 6 7">Involved in synaptic functions in photoreceptor cells, the signal transduction in immune cells as a Src family kinase activator, endosome recycling, the uptake of bacteria and endocytosis, protein trafficking in sensory neurons and as lipid-binding chaperone with specificity for a diverse subset of myristoylated proteins. Specifically binds the myristoyl moiety of a subset of N-terminally myristoylated proteins and is required for their localization. Binds myristoylated GNAT1 and is required for G-protein localization and trafficking in sensory neurons (PubMed:21642972). Probably plays a role in trafficking proteins in photoreceptor cells (PubMed:17174953). Plays important roles in mediating Src family kinase signals for the completion of cytokinesis via RAB11A.</text>
</comment>
<comment type="subunit">
    <text evidence="2 8">May interact with GTP-bound ARL1. Interacts with ARL2 and ARL3 (GTP-bound forms); this promotes the release of myristoylated cargo proteins (By similarity). Found in a complex with ARL3, RP2 and UNC119; RP2 induces hydrolysis of GTP ARL3 in the complex, leading to the release of UNC119. Interacts with NPHP3 (when myristoylated). Interacts with CYS1 (when myristoylated). Interacts with MACIR; interaction only takes place when UNC119 is not liganded with myristoylated proteins (By similarity). Interacts with CABP4; in the absence of calcium. Interacts with DNM1; leading to a decrease of DNM1 GTPase activity. Interacts with LCK; this interaction plays a crucial role in activation of LCK (By similarity). Interacts with FYN (By similarity). Interacts with RAB11A; in a cell cycle-dependent manner (By similarity). Interacts with LYN (via SH2 and SH3 domains); leading to LYN activation (By similarity). Found in a complex with ABL1, ABL2, CRK and UNC119; leading to the inhibition of CRK phosphorylation by ABL kinases. Interacts with CD44 (By similarity). Interacts with KLHL18 (via kelch repeats). Interacts with PPP3CA, PPP3CB and PPP3CC (PubMed:31696965). Interacts with USP48; this interaction promotes UNC119 stability (By similarity).</text>
</comment>
<comment type="subcellular location">
    <subcellularLocation>
        <location evidence="2">Cytoplasm</location>
        <location evidence="2">Cytoskeleton</location>
        <location evidence="2">Microtubule organizing center</location>
        <location evidence="2">Centrosome</location>
    </subcellularLocation>
    <subcellularLocation>
        <location evidence="2">Cytoplasm</location>
        <location evidence="2">Cytoskeleton</location>
        <location evidence="2">Spindle</location>
    </subcellularLocation>
    <subcellularLocation>
        <location evidence="2">Cytoplasm</location>
        <location evidence="2">Cytoskeleton</location>
        <location evidence="2">Spindle pole</location>
    </subcellularLocation>
    <text evidence="2">ocalizes to the centrosome in interphase cells and begins to translocate from the spindle pole to the spindle midzone after the onset of mitosis; it then localizes to the intercellular bridge in telophase cells and to the midbody in cytokinetic cells.</text>
</comment>
<comment type="tissue specificity">
    <text evidence="5">Localized in photoreceptor synapses in the outer plexiform layer of the retina.</text>
</comment>
<comment type="domain">
    <text evidence="2">Adopts an immunoglobulin-like beta-sandwich fold forming a hydrophobic cavity that captures N-terminally myristoylated target peptides. Phe residues within the hydrophobic beta sandwich are required for myristate binding (By similarity).</text>
</comment>
<comment type="PTM">
    <text evidence="8">Phosphorylation suppresses its interaction with KLHL18 and down-regulates its KLHL18-mediated degradation (PubMed:31696965). Phosphorylated more under light conditions than dark conditions (PubMed:31696965). Dephosphorylated by calcineurin (PubMed:31696965).</text>
</comment>
<comment type="disruption phenotype">
    <text evidence="4 7">Mice develop a slowly progressive retinal degeneration, characterized by mottling in the fundus, mild thinning of the photoreceptor layer, and increase in apoptosis as early as 6 months, dramatic acceleration at approximately 17 months, and virtual obliteration of the photoreceptors by 20 months. Phenotypes are due to defects in protein trafficking, such as Gnat1 mislocalization.</text>
</comment>
<comment type="similarity">
    <text evidence="9">Belongs to the PDE6D/unc-119 family.</text>
</comment>
<evidence type="ECO:0000250" key="1"/>
<evidence type="ECO:0000250" key="2">
    <source>
        <dbReference type="UniProtKB" id="Q13432"/>
    </source>
</evidence>
<evidence type="ECO:0000256" key="3">
    <source>
        <dbReference type="SAM" id="MobiDB-lite"/>
    </source>
</evidence>
<evidence type="ECO:0000269" key="4">
    <source>
    </source>
</evidence>
<evidence type="ECO:0000269" key="5">
    <source>
    </source>
</evidence>
<evidence type="ECO:0000269" key="6">
    <source>
    </source>
</evidence>
<evidence type="ECO:0000269" key="7">
    <source>
    </source>
</evidence>
<evidence type="ECO:0000269" key="8">
    <source>
    </source>
</evidence>
<evidence type="ECO:0000305" key="9"/>
<evidence type="ECO:0007744" key="10">
    <source>
    </source>
</evidence>
<evidence type="ECO:0007744" key="11">
    <source>
    </source>
</evidence>
<accession>Q9Z2R6</accession>